<keyword id="KW-0150">Chloroplast</keyword>
<keyword id="KW-0472">Membrane</keyword>
<keyword id="KW-0602">Photosynthesis</keyword>
<keyword id="KW-0603">Photosystem I</keyword>
<keyword id="KW-0934">Plastid</keyword>
<keyword id="KW-0793">Thylakoid</keyword>
<keyword id="KW-0812">Transmembrane</keyword>
<keyword id="KW-1133">Transmembrane helix</keyword>
<organism>
    <name type="scientific">Olimarabidopsis pumila</name>
    <name type="common">Dwarf rocket</name>
    <name type="synonym">Arabidopsis griffithiana</name>
    <dbReference type="NCBI Taxonomy" id="74718"/>
    <lineage>
        <taxon>Eukaryota</taxon>
        <taxon>Viridiplantae</taxon>
        <taxon>Streptophyta</taxon>
        <taxon>Embryophyta</taxon>
        <taxon>Tracheophyta</taxon>
        <taxon>Spermatophyta</taxon>
        <taxon>Magnoliopsida</taxon>
        <taxon>eudicotyledons</taxon>
        <taxon>Gunneridae</taxon>
        <taxon>Pentapetalae</taxon>
        <taxon>rosids</taxon>
        <taxon>malvids</taxon>
        <taxon>Brassicales</taxon>
        <taxon>Brassicaceae</taxon>
        <taxon>Alyssopsideae</taxon>
        <taxon>Olimarabidopsis</taxon>
    </lineage>
</organism>
<protein>
    <recommendedName>
        <fullName evidence="1">Photosystem I reaction center subunit IX</fullName>
    </recommendedName>
    <alternativeName>
        <fullName evidence="1">PSI-J</fullName>
    </alternativeName>
</protein>
<comment type="function">
    <text evidence="1">May help in the organization of the PsaE and PsaF subunits.</text>
</comment>
<comment type="subcellular location">
    <subcellularLocation>
        <location evidence="1">Plastid</location>
        <location evidence="1">Chloroplast thylakoid membrane</location>
        <topology evidence="1">Single-pass membrane protein</topology>
    </subcellularLocation>
</comment>
<comment type="similarity">
    <text evidence="1">Belongs to the PsaJ family.</text>
</comment>
<gene>
    <name evidence="1" type="primary">psaJ</name>
</gene>
<geneLocation type="chloroplast"/>
<reference key="1">
    <citation type="submission" date="2007-03" db="EMBL/GenBank/DDBJ databases">
        <title>Sequence analysis of Arabidopsis pumila JS2 chloroplast DNA.</title>
        <authorList>
            <person name="Hosouchi T."/>
            <person name="Tsuruoka H."/>
            <person name="Kotani H."/>
        </authorList>
    </citation>
    <scope>NUCLEOTIDE SEQUENCE [LARGE SCALE GENOMIC DNA]</scope>
</reference>
<feature type="chain" id="PRO_0000354166" description="Photosystem I reaction center subunit IX">
    <location>
        <begin position="1"/>
        <end position="44"/>
    </location>
</feature>
<feature type="transmembrane region" description="Helical" evidence="1">
    <location>
        <begin position="7"/>
        <end position="27"/>
    </location>
</feature>
<evidence type="ECO:0000255" key="1">
    <source>
        <dbReference type="HAMAP-Rule" id="MF_00522"/>
    </source>
</evidence>
<dbReference type="EMBL" id="AP009368">
    <property type="protein sequence ID" value="BAF49959.1"/>
    <property type="molecule type" value="Genomic_DNA"/>
</dbReference>
<dbReference type="RefSeq" id="YP_001123135.1">
    <property type="nucleotide sequence ID" value="NC_009267.1"/>
</dbReference>
<dbReference type="SMR" id="A4QJV1"/>
<dbReference type="GeneID" id="4962463"/>
<dbReference type="GO" id="GO:0009535">
    <property type="term" value="C:chloroplast thylakoid membrane"/>
    <property type="evidence" value="ECO:0007669"/>
    <property type="project" value="UniProtKB-SubCell"/>
</dbReference>
<dbReference type="GO" id="GO:0009522">
    <property type="term" value="C:photosystem I"/>
    <property type="evidence" value="ECO:0007669"/>
    <property type="project" value="UniProtKB-KW"/>
</dbReference>
<dbReference type="GO" id="GO:0015979">
    <property type="term" value="P:photosynthesis"/>
    <property type="evidence" value="ECO:0007669"/>
    <property type="project" value="UniProtKB-UniRule"/>
</dbReference>
<dbReference type="FunFam" id="1.20.5.510:FF:000001">
    <property type="entry name" value="Photosystem I reaction center subunit IX"/>
    <property type="match status" value="1"/>
</dbReference>
<dbReference type="Gene3D" id="1.20.5.510">
    <property type="entry name" value="Single helix bin"/>
    <property type="match status" value="1"/>
</dbReference>
<dbReference type="HAMAP" id="MF_00522">
    <property type="entry name" value="PSI_PsaJ"/>
    <property type="match status" value="1"/>
</dbReference>
<dbReference type="InterPro" id="IPR002615">
    <property type="entry name" value="PSI_PsaJ"/>
</dbReference>
<dbReference type="InterPro" id="IPR036062">
    <property type="entry name" value="PSI_PsaJ_sf"/>
</dbReference>
<dbReference type="PANTHER" id="PTHR36082">
    <property type="match status" value="1"/>
</dbReference>
<dbReference type="PANTHER" id="PTHR36082:SF2">
    <property type="entry name" value="PHOTOSYSTEM I REACTION CENTER SUBUNIT IX"/>
    <property type="match status" value="1"/>
</dbReference>
<dbReference type="Pfam" id="PF01701">
    <property type="entry name" value="PSI_PsaJ"/>
    <property type="match status" value="1"/>
</dbReference>
<dbReference type="SUPFAM" id="SSF81544">
    <property type="entry name" value="Subunit IX of photosystem I reaction centre, PsaJ"/>
    <property type="match status" value="1"/>
</dbReference>
<accession>A4QJV1</accession>
<sequence length="44" mass="5009">MRDLKTYLSVAPVLSTLWFGSLAGLLIEINRLFPDALTFPFFSF</sequence>
<name>PSAJ_OLIPU</name>
<proteinExistence type="inferred from homology"/>